<sequence>MATPPLVPLLLLLLLLLPHAHHRLALRSVLATQRAQDSPAVHLINGLGQEPIQVLTFDLTRLVKASSSFELRTWDSEGVIFYGDTSPKDDWFMLGLRDGRPEIQMHNPWAQLTVGAGPRLDDGSWHQVHVKIRGDSVLLEVDGKEVLRLSQVSGTLHDKPQPVMKLAVGGLLFPPSSLRLPLVPALDGCLRRGSWLDPQAQISASAHASRRSCDVELQPGIFFPPGTHAEFSLQDIPQPQTEPWAFSLDLELKPSEGSGRLLALGTPEDPNWLSLHLQDQKVVLSSGMEPGLDLPLAWGLPLQLKLGVSTAVLSQGSKKQALGLPPSGLGPLLNLWAQPQGRLFLGALPGEDSSASFCLDGLWAQGQKLDMDKALNRSQDIWTHSCPSSPGNGTDTSH</sequence>
<gene>
    <name type="primary">SHBG</name>
</gene>
<evidence type="ECO:0000250" key="1"/>
<evidence type="ECO:0000255" key="2">
    <source>
        <dbReference type="PROSITE-ProRule" id="PRU00122"/>
    </source>
</evidence>
<evidence type="ECO:0000269" key="3">
    <source>
    </source>
</evidence>
<evidence type="ECO:0000305" key="4"/>
<comment type="function">
    <text evidence="1">Functions as an androgen transport protein, but may also be involved in receptor mediated processes. Each dimer binds one molecule of steroid. Specific for 5-alpha-dihydrotestosterone, testosterone, and 17-beta-estradiol. Regulates the plasma metabolic clearance rate of steroid hormones by controlling their plasma concentration (By similarity).</text>
</comment>
<comment type="subunit">
    <text>Homodimer.</text>
</comment>
<comment type="subcellular location">
    <subcellularLocation>
        <location evidence="1">Secreted</location>
    </subcellularLocation>
    <text evidence="1">In testis, it is synthesized by the Sertoli cells, secreted into the lumen of the seminiferous tubule and transported to the epididymis.</text>
</comment>
<protein>
    <recommendedName>
        <fullName>Sex hormone-binding globulin</fullName>
        <shortName>SHBG</shortName>
    </recommendedName>
    <alternativeName>
        <fullName>Sex steroid-binding protein</fullName>
        <shortName>SBP</shortName>
    </alternativeName>
    <alternativeName>
        <fullName>Testis-specific androgen-binding protein</fullName>
        <shortName>ABP</shortName>
    </alternativeName>
</protein>
<dbReference type="EMBL" id="U57553">
    <property type="protein sequence ID" value="AAB72240.1"/>
    <property type="molecule type" value="mRNA"/>
</dbReference>
<dbReference type="EMBL" id="AF144711">
    <property type="protein sequence ID" value="AAF70547.1"/>
    <property type="molecule type" value="Genomic_DNA"/>
</dbReference>
<dbReference type="EMBL" id="X12661">
    <property type="protein sequence ID" value="CAA31187.1"/>
    <property type="molecule type" value="mRNA"/>
</dbReference>
<dbReference type="PIR" id="A34436">
    <property type="entry name" value="A34436"/>
</dbReference>
<dbReference type="RefSeq" id="NP_001075839.1">
    <property type="nucleotide sequence ID" value="NM_001082370.1"/>
</dbReference>
<dbReference type="SMR" id="P15196"/>
<dbReference type="FunCoup" id="P15196">
    <property type="interactions" value="10"/>
</dbReference>
<dbReference type="STRING" id="9986.ENSOCUP00000002218"/>
<dbReference type="ChEMBL" id="CHEMBL1075202"/>
<dbReference type="GlyCosmos" id="P15196">
    <property type="glycosylation" value="2 sites, No reported glycans"/>
</dbReference>
<dbReference type="PaxDb" id="9986-ENSOCUP00000002218"/>
<dbReference type="GeneID" id="100009224"/>
<dbReference type="KEGG" id="ocu:100009224"/>
<dbReference type="CTD" id="6462"/>
<dbReference type="eggNOG" id="KOG3927">
    <property type="taxonomic scope" value="Eukaryota"/>
</dbReference>
<dbReference type="InParanoid" id="P15196"/>
<dbReference type="OrthoDB" id="6275838at2759"/>
<dbReference type="PRO" id="PR:P15196"/>
<dbReference type="Proteomes" id="UP000001811">
    <property type="component" value="Unplaced"/>
</dbReference>
<dbReference type="GO" id="GO:0005576">
    <property type="term" value="C:extracellular region"/>
    <property type="evidence" value="ECO:0007669"/>
    <property type="project" value="UniProtKB-SubCell"/>
</dbReference>
<dbReference type="GO" id="GO:0005496">
    <property type="term" value="F:steroid binding"/>
    <property type="evidence" value="ECO:0007669"/>
    <property type="project" value="UniProtKB-KW"/>
</dbReference>
<dbReference type="CDD" id="cd00110">
    <property type="entry name" value="LamG"/>
    <property type="match status" value="1"/>
</dbReference>
<dbReference type="FunFam" id="2.60.120.200:FF:000107">
    <property type="entry name" value="Sex hormone-binding globulin"/>
    <property type="match status" value="1"/>
</dbReference>
<dbReference type="Gene3D" id="2.60.120.200">
    <property type="match status" value="2"/>
</dbReference>
<dbReference type="InterPro" id="IPR013320">
    <property type="entry name" value="ConA-like_dom_sf"/>
</dbReference>
<dbReference type="InterPro" id="IPR051145">
    <property type="entry name" value="GAS-SHBG-PROS"/>
</dbReference>
<dbReference type="InterPro" id="IPR001791">
    <property type="entry name" value="Laminin_G"/>
</dbReference>
<dbReference type="PANTHER" id="PTHR24040">
    <property type="entry name" value="LAMININ G-LIKE DOMAIN-CONTAINING PROTEIN"/>
    <property type="match status" value="1"/>
</dbReference>
<dbReference type="PANTHER" id="PTHR24040:SF3">
    <property type="entry name" value="SEX HORMONE-BINDING GLOBULIN"/>
    <property type="match status" value="1"/>
</dbReference>
<dbReference type="Pfam" id="PF00054">
    <property type="entry name" value="Laminin_G_1"/>
    <property type="match status" value="1"/>
</dbReference>
<dbReference type="SMART" id="SM00282">
    <property type="entry name" value="LamG"/>
    <property type="match status" value="1"/>
</dbReference>
<dbReference type="SUPFAM" id="SSF49899">
    <property type="entry name" value="Concanavalin A-like lectins/glucanases"/>
    <property type="match status" value="2"/>
</dbReference>
<dbReference type="PROSITE" id="PS50025">
    <property type="entry name" value="LAM_G_DOMAIN"/>
    <property type="match status" value="1"/>
</dbReference>
<proteinExistence type="evidence at protein level"/>
<organism>
    <name type="scientific">Oryctolagus cuniculus</name>
    <name type="common">Rabbit</name>
    <dbReference type="NCBI Taxonomy" id="9986"/>
    <lineage>
        <taxon>Eukaryota</taxon>
        <taxon>Metazoa</taxon>
        <taxon>Chordata</taxon>
        <taxon>Craniata</taxon>
        <taxon>Vertebrata</taxon>
        <taxon>Euteleostomi</taxon>
        <taxon>Mammalia</taxon>
        <taxon>Eutheria</taxon>
        <taxon>Euarchontoglires</taxon>
        <taxon>Glires</taxon>
        <taxon>Lagomorpha</taxon>
        <taxon>Leporidae</taxon>
        <taxon>Oryctolagus</taxon>
    </lineage>
</organism>
<feature type="signal peptide" evidence="3">
    <location>
        <begin position="1"/>
        <end position="31"/>
    </location>
</feature>
<feature type="chain" id="PRO_0000032560" description="Sex hormone-binding globulin">
    <location>
        <begin position="32"/>
        <end position="398"/>
    </location>
</feature>
<feature type="domain" description="Laminin G-like 1" evidence="2">
    <location>
        <begin position="41"/>
        <end position="213"/>
    </location>
</feature>
<feature type="domain" description="Laminin G-like 2" evidence="2">
    <location>
        <begin position="220"/>
        <end position="386"/>
    </location>
</feature>
<feature type="glycosylation site" description="N-linked (GlcNAc...) asparagine">
    <location>
        <position position="376"/>
    </location>
</feature>
<feature type="glycosylation site" description="N-linked (GlcNAc...) asparagine">
    <location>
        <position position="392"/>
    </location>
</feature>
<feature type="disulfide bond">
    <location>
        <begin position="189"/>
        <end position="213"/>
    </location>
</feature>
<feature type="disulfide bond">
    <location>
        <begin position="358"/>
        <end position="386"/>
    </location>
</feature>
<feature type="sequence conflict" description="In Ref. 4; CAA31187." evidence="4" ref="4">
    <original>I</original>
    <variation>V</variation>
    <location>
        <position position="103"/>
    </location>
</feature>
<feature type="sequence conflict" description="In Ref. 3; AA sequence." evidence="4" ref="3">
    <original>L</original>
    <variation>I</variation>
    <location>
        <position position="166"/>
    </location>
</feature>
<feature type="sequence conflict" description="In Ref. 3; AA sequence." evidence="4" ref="3">
    <original>PS</original>
    <variation>SP</variation>
    <location>
        <begin position="326"/>
        <end position="327"/>
    </location>
</feature>
<feature type="sequence conflict" description="In Ref. 3; AA sequence." evidence="4" ref="3">
    <original>Q</original>
    <variation>K</variation>
    <location>
        <position position="338"/>
    </location>
</feature>
<feature type="sequence conflict" description="In Ref. 4; CAA31187." evidence="4" ref="4">
    <original>D</original>
    <variation>V</variation>
    <location>
        <position position="370"/>
    </location>
</feature>
<feature type="sequence conflict" description="In Ref. 4; CAA31187." evidence="4" ref="4">
    <original>TD</original>
    <variation>SV</variation>
    <location>
        <begin position="394"/>
        <end position="395"/>
    </location>
</feature>
<accession>P15196</accession>
<accession>Q28663</accession>
<accession>Q28669</accession>
<name>SHBG_RABIT</name>
<reference key="1">
    <citation type="journal article" date="1997" name="J. Endocrinol.">
        <title>Rabbit sex hormone binding globulin: primary structure, tissue expression, and structure/function analyses by expression in Escherichia coli.</title>
        <authorList>
            <person name="Lee W.M."/>
            <person name="Wong A.S."/>
            <person name="Tu A.W.K."/>
            <person name="Cheung C.H."/>
            <person name="Li J.C."/>
            <person name="Hammond G.L."/>
        </authorList>
    </citation>
    <scope>NUCLEOTIDE SEQUENCE [MRNA]</scope>
    <source>
        <strain>New Zealand white</strain>
        <tissue>Liver</tissue>
    </source>
</reference>
<reference key="2">
    <citation type="journal article" date="2000" name="Endocrinology">
        <title>The rabbit sex hormone-binding globulin gene: structural organization and characterization of its 5-flanking region.</title>
        <authorList>
            <person name="Ip Y.C."/>
            <person name="Lee W.M."/>
            <person name="Hammond G.L."/>
        </authorList>
    </citation>
    <scope>NUCLEOTIDE SEQUENCE [GENOMIC DNA]</scope>
</reference>
<reference key="3">
    <citation type="journal article" date="1989" name="J. Biol. Chem.">
        <title>The amino acid sequence of the sex steroid-binding protein of rabbit serum.</title>
        <authorList>
            <person name="Griffin P.R."/>
            <person name="Kumar S."/>
            <person name="Shabanowitz J."/>
            <person name="Charbonneau H."/>
            <person name="Namkung P.C."/>
            <person name="Walsh K.A."/>
            <person name="Hunt D.F."/>
            <person name="Petra P.H."/>
        </authorList>
    </citation>
    <scope>PROTEIN SEQUENCE OF 32-398</scope>
    <source>
        <tissue>Serum</tissue>
    </source>
</reference>
<reference key="4">
    <citation type="submission" date="1988-08" db="EMBL/GenBank/DDBJ databases">
        <authorList>
            <person name="Yarbrough W.G."/>
            <person name="Welch J.E."/>
            <person name="Joseph D.R."/>
        </authorList>
    </citation>
    <scope>NUCLEOTIDE SEQUENCE [MRNA] OF 103-398</scope>
    <source>
        <strain>New Zealand</strain>
        <tissue>Testis</tissue>
    </source>
</reference>
<keyword id="KW-0903">Direct protein sequencing</keyword>
<keyword id="KW-1015">Disulfide bond</keyword>
<keyword id="KW-0325">Glycoprotein</keyword>
<keyword id="KW-0446">Lipid-binding</keyword>
<keyword id="KW-1185">Reference proteome</keyword>
<keyword id="KW-0677">Repeat</keyword>
<keyword id="KW-0964">Secreted</keyword>
<keyword id="KW-0732">Signal</keyword>
<keyword id="KW-0754">Steroid-binding</keyword>